<feature type="chain" id="PRO_0000423718" description="UDP-D-apiose/UDP-D-xylose synthase 2">
    <location>
        <begin position="1"/>
        <end position="389"/>
    </location>
</feature>
<feature type="active site" description="Proton acceptor" evidence="1">
    <location>
        <position position="185"/>
    </location>
</feature>
<feature type="binding site" evidence="1">
    <location>
        <position position="28"/>
    </location>
    <ligand>
        <name>NAD(+)</name>
        <dbReference type="ChEBI" id="CHEBI:57540"/>
    </ligand>
</feature>
<feature type="binding site" evidence="1">
    <location>
        <position position="29"/>
    </location>
    <ligand>
        <name>NAD(+)</name>
        <dbReference type="ChEBI" id="CHEBI:57540"/>
    </ligand>
</feature>
<feature type="binding site" evidence="1">
    <location>
        <position position="49"/>
    </location>
    <ligand>
        <name>NAD(+)</name>
        <dbReference type="ChEBI" id="CHEBI:57540"/>
    </ligand>
</feature>
<feature type="binding site" evidence="1">
    <location>
        <position position="76"/>
    </location>
    <ligand>
        <name>NAD(+)</name>
        <dbReference type="ChEBI" id="CHEBI:57540"/>
    </ligand>
</feature>
<feature type="binding site" evidence="1">
    <location>
        <position position="77"/>
    </location>
    <ligand>
        <name>NAD(+)</name>
        <dbReference type="ChEBI" id="CHEBI:57540"/>
    </ligand>
</feature>
<feature type="binding site" evidence="1">
    <location>
        <position position="96"/>
    </location>
    <ligand>
        <name>NAD(+)</name>
        <dbReference type="ChEBI" id="CHEBI:57540"/>
    </ligand>
</feature>
<feature type="binding site" evidence="1">
    <location>
        <position position="105"/>
    </location>
    <ligand>
        <name>UDP-alpha-D-glucuronate</name>
        <dbReference type="ChEBI" id="CHEBI:58052"/>
    </ligand>
</feature>
<feature type="binding site" evidence="1">
    <location>
        <position position="139"/>
    </location>
    <ligand>
        <name>UDP-alpha-D-glucuronate</name>
        <dbReference type="ChEBI" id="CHEBI:58052"/>
    </ligand>
</feature>
<feature type="binding site" evidence="1">
    <location>
        <position position="141"/>
    </location>
    <ligand>
        <name>UDP-alpha-D-glucuronate</name>
        <dbReference type="ChEBI" id="CHEBI:58052"/>
    </ligand>
</feature>
<feature type="binding site" evidence="1">
    <location>
        <position position="182"/>
    </location>
    <ligand>
        <name>UDP-alpha-D-glucuronate</name>
        <dbReference type="ChEBI" id="CHEBI:58052"/>
    </ligand>
</feature>
<feature type="binding site" evidence="1">
    <location>
        <position position="185"/>
    </location>
    <ligand>
        <name>NAD(+)</name>
        <dbReference type="ChEBI" id="CHEBI:57540"/>
    </ligand>
</feature>
<feature type="binding site" evidence="1">
    <location>
        <position position="185"/>
    </location>
    <ligand>
        <name>UDP-alpha-D-glucuronate</name>
        <dbReference type="ChEBI" id="CHEBI:58052"/>
    </ligand>
</feature>
<feature type="binding site" evidence="1">
    <location>
        <position position="189"/>
    </location>
    <ligand>
        <name>NAD(+)</name>
        <dbReference type="ChEBI" id="CHEBI:57540"/>
    </ligand>
</feature>
<feature type="binding site" evidence="1">
    <location>
        <position position="214"/>
    </location>
    <ligand>
        <name>UDP-alpha-D-glucuronate</name>
        <dbReference type="ChEBI" id="CHEBI:58052"/>
    </ligand>
</feature>
<feature type="binding site" evidence="1">
    <location>
        <position position="215"/>
    </location>
    <ligand>
        <name>NAD(+)</name>
        <dbReference type="ChEBI" id="CHEBI:57540"/>
    </ligand>
</feature>
<feature type="binding site" evidence="1">
    <location>
        <position position="235"/>
    </location>
    <ligand>
        <name>NAD(+)</name>
        <dbReference type="ChEBI" id="CHEBI:57540"/>
    </ligand>
</feature>
<feature type="binding site" evidence="1">
    <location>
        <position position="251"/>
    </location>
    <ligand>
        <name>UDP-alpha-D-glucuronate</name>
        <dbReference type="ChEBI" id="CHEBI:58052"/>
    </ligand>
</feature>
<feature type="binding site" evidence="1">
    <location>
        <position position="253"/>
    </location>
    <ligand>
        <name>UDP-alpha-D-glucuronate</name>
        <dbReference type="ChEBI" id="CHEBI:58052"/>
    </ligand>
</feature>
<feature type="binding site" evidence="1">
    <location>
        <position position="260"/>
    </location>
    <ligand>
        <name>UDP-alpha-D-glucuronate</name>
        <dbReference type="ChEBI" id="CHEBI:58052"/>
    </ligand>
</feature>
<feature type="binding site" evidence="1">
    <location>
        <position position="331"/>
    </location>
    <ligand>
        <name>UDP-alpha-D-glucuronate</name>
        <dbReference type="ChEBI" id="CHEBI:58052"/>
    </ligand>
</feature>
<feature type="binding site" evidence="1">
    <location>
        <position position="335"/>
    </location>
    <ligand>
        <name>UDP-alpha-D-glucuronate</name>
        <dbReference type="ChEBI" id="CHEBI:58052"/>
    </ligand>
</feature>
<feature type="binding site" evidence="1">
    <location>
        <position position="337"/>
    </location>
    <ligand>
        <name>UDP-alpha-D-glucuronate</name>
        <dbReference type="ChEBI" id="CHEBI:58052"/>
    </ligand>
</feature>
<feature type="binding site" evidence="1">
    <location>
        <position position="341"/>
    </location>
    <ligand>
        <name>UDP-alpha-D-glucuronate</name>
        <dbReference type="ChEBI" id="CHEBI:58052"/>
    </ligand>
</feature>
<feature type="sequence conflict" description="In Ref. 4; AAM65998." evidence="4" ref="4">
    <original>E</original>
    <variation>D</variation>
    <location>
        <position position="319"/>
    </location>
</feature>
<feature type="sequence conflict" description="In Ref. 3; AAK68820." evidence="4" ref="3">
    <original>WN</original>
    <variation>CT</variation>
    <location>
        <begin position="354"/>
        <end position="355"/>
    </location>
</feature>
<evidence type="ECO:0000250" key="1">
    <source>
        <dbReference type="UniProtKB" id="Q9ZUY6"/>
    </source>
</evidence>
<evidence type="ECO:0000269" key="2">
    <source>
    </source>
</evidence>
<evidence type="ECO:0000303" key="3">
    <source>
    </source>
</evidence>
<evidence type="ECO:0000305" key="4"/>
<evidence type="ECO:0000312" key="5">
    <source>
        <dbReference type="Araport" id="AT1G08200"/>
    </source>
</evidence>
<evidence type="ECO:0000312" key="6">
    <source>
        <dbReference type="EMBL" id="AAF18254.1"/>
    </source>
</evidence>
<comment type="function">
    <text evidence="2">Together with AXS1, catalyzes the conversion of UDP-D-glucuronate into a mixture of UDP-D-apiose (UDP-Api) as the main product and UDP-D-xylose to a lesser extent, via a cycle of oxidation and reduction (PubMed:32662159). D-Apiose (3-C-hydroxymethyl-d-erythrose) is the only plant cell wall monosaccharide with a branched carbon skeleton and is found in rhamnogalacturonan II (RG-II), apiogalacturonan, and several apioglycosides (PubMed:32662159).</text>
</comment>
<comment type="catalytic activity">
    <reaction evidence="1">
        <text>UDP-alpha-D-glucuronate + H(+) = UDP-alpha-D-xylose + CO2</text>
        <dbReference type="Rhea" id="RHEA:23916"/>
        <dbReference type="ChEBI" id="CHEBI:15378"/>
        <dbReference type="ChEBI" id="CHEBI:16526"/>
        <dbReference type="ChEBI" id="CHEBI:57632"/>
        <dbReference type="ChEBI" id="CHEBI:58052"/>
        <dbReference type="EC" id="4.1.1.35"/>
    </reaction>
    <physiologicalReaction direction="left-to-right" evidence="1">
        <dbReference type="Rhea" id="RHEA:23917"/>
    </physiologicalReaction>
</comment>
<comment type="catalytic activity">
    <reaction evidence="1">
        <text>UDP-alpha-D-glucuronate + H(+) = UDP-alpha-D-apiose + CO2</text>
        <dbReference type="Rhea" id="RHEA:70523"/>
        <dbReference type="ChEBI" id="CHEBI:15378"/>
        <dbReference type="ChEBI" id="CHEBI:16526"/>
        <dbReference type="ChEBI" id="CHEBI:58052"/>
        <dbReference type="ChEBI" id="CHEBI:73883"/>
    </reaction>
    <physiologicalReaction direction="left-to-right" evidence="1">
        <dbReference type="Rhea" id="RHEA:70524"/>
    </physiologicalReaction>
</comment>
<comment type="cofactor">
    <cofactor evidence="1">
        <name>NAD(+)</name>
        <dbReference type="ChEBI" id="CHEBI:57540"/>
    </cofactor>
</comment>
<comment type="subunit">
    <text evidence="2">Homodimer and heterodimer with AXS1.</text>
</comment>
<comment type="subcellular location">
    <subcellularLocation>
        <location evidence="2">Cytoplasm</location>
    </subcellularLocation>
</comment>
<comment type="tissue specificity">
    <text evidence="2">Widely expressed with stronger expression in dark-grown seedlings, leaves and stems, and lower levels in flowers, siliques, pistils, pollen and roots.</text>
</comment>
<comment type="disruption phenotype">
    <text evidence="2">No visible morphological differences (PubMed:32662159). Plants lacking both AXS1 and AXS2 are not viable (PubMed:32662159). Heterozygous axs1/+ axs2 and axs1 axs2/+ mutants have intermediate phenotypes, including impaired seed production, sterile pollen and lost of shoot and root apical dominance; these phenotypes are associated with strongly reduced UDP-alpha-D-apiose (UDP-Api) levels (PubMed:32662159). Cell walls are thicker and contain reduced number of rhamnogalacturonan II-borate (RG-II-borate) complex in heterozygous double mutants (PubMed:32662159).</text>
</comment>
<comment type="similarity">
    <text evidence="4">Belongs to the NAD(P)-dependent epimerase/dehydratase family.</text>
</comment>
<protein>
    <recommendedName>
        <fullName evidence="3">UDP-D-apiose/UDP-D-xylose synthase 2</fullName>
        <ecNumber evidence="1">4.1.1.35</ecNumber>
    </recommendedName>
</protein>
<name>AXS2_ARATH</name>
<dbReference type="EC" id="4.1.1.35" evidence="1"/>
<dbReference type="EMBL" id="AC011438">
    <property type="protein sequence ID" value="AAF18254.1"/>
    <property type="molecule type" value="Genomic_DNA"/>
</dbReference>
<dbReference type="EMBL" id="CP002684">
    <property type="protein sequence ID" value="AEE28260.1"/>
    <property type="molecule type" value="Genomic_DNA"/>
</dbReference>
<dbReference type="EMBL" id="AY042880">
    <property type="protein sequence ID" value="AAK68820.1"/>
    <property type="molecule type" value="mRNA"/>
</dbReference>
<dbReference type="EMBL" id="BT001220">
    <property type="protein sequence ID" value="AAN65107.1"/>
    <property type="molecule type" value="mRNA"/>
</dbReference>
<dbReference type="EMBL" id="AY088462">
    <property type="protein sequence ID" value="AAM65998.1"/>
    <property type="molecule type" value="mRNA"/>
</dbReference>
<dbReference type="PIR" id="C86216">
    <property type="entry name" value="C86216"/>
</dbReference>
<dbReference type="RefSeq" id="NP_563807.1">
    <property type="nucleotide sequence ID" value="NM_100694.5"/>
</dbReference>
<dbReference type="SMR" id="Q9SGE0"/>
<dbReference type="BioGRID" id="22582">
    <property type="interactions" value="11"/>
</dbReference>
<dbReference type="FunCoup" id="Q9SGE0">
    <property type="interactions" value="984"/>
</dbReference>
<dbReference type="STRING" id="3702.Q9SGE0"/>
<dbReference type="iPTMnet" id="Q9SGE0"/>
<dbReference type="PaxDb" id="3702-AT1G08200.1"/>
<dbReference type="ProteomicsDB" id="240943"/>
<dbReference type="EnsemblPlants" id="AT1G08200.1">
    <property type="protein sequence ID" value="AT1G08200.1"/>
    <property type="gene ID" value="AT1G08200"/>
</dbReference>
<dbReference type="GeneID" id="837341"/>
<dbReference type="Gramene" id="AT1G08200.1">
    <property type="protein sequence ID" value="AT1G08200.1"/>
    <property type="gene ID" value="AT1G08200"/>
</dbReference>
<dbReference type="KEGG" id="ath:AT1G08200"/>
<dbReference type="Araport" id="AT1G08200"/>
<dbReference type="TAIR" id="AT1G08200">
    <property type="gene designation" value="AXS2"/>
</dbReference>
<dbReference type="eggNOG" id="KOG1429">
    <property type="taxonomic scope" value="Eukaryota"/>
</dbReference>
<dbReference type="HOGENOM" id="CLU_007383_7_0_1"/>
<dbReference type="InParanoid" id="Q9SGE0"/>
<dbReference type="OMA" id="WIYSCAK"/>
<dbReference type="OrthoDB" id="331544at2759"/>
<dbReference type="PhylomeDB" id="Q9SGE0"/>
<dbReference type="BioCyc" id="ARA:AT1G08200-MONOMER"/>
<dbReference type="PRO" id="PR:Q9SGE0"/>
<dbReference type="Proteomes" id="UP000006548">
    <property type="component" value="Chromosome 1"/>
</dbReference>
<dbReference type="ExpressionAtlas" id="Q9SGE0">
    <property type="expression patterns" value="baseline and differential"/>
</dbReference>
<dbReference type="GO" id="GO:0048046">
    <property type="term" value="C:apoplast"/>
    <property type="evidence" value="ECO:0007005"/>
    <property type="project" value="TAIR"/>
</dbReference>
<dbReference type="GO" id="GO:0005737">
    <property type="term" value="C:cytoplasm"/>
    <property type="evidence" value="ECO:0000314"/>
    <property type="project" value="UniProtKB"/>
</dbReference>
<dbReference type="GO" id="GO:0005829">
    <property type="term" value="C:cytosol"/>
    <property type="evidence" value="ECO:0007005"/>
    <property type="project" value="TAIR"/>
</dbReference>
<dbReference type="GO" id="GO:0005576">
    <property type="term" value="C:extracellular region"/>
    <property type="evidence" value="ECO:0007005"/>
    <property type="project" value="TAIR"/>
</dbReference>
<dbReference type="GO" id="GO:0042802">
    <property type="term" value="F:identical protein binding"/>
    <property type="evidence" value="ECO:0000314"/>
    <property type="project" value="UniProtKB"/>
</dbReference>
<dbReference type="GO" id="GO:0046982">
    <property type="term" value="F:protein heterodimerization activity"/>
    <property type="evidence" value="ECO:0000353"/>
    <property type="project" value="UniProtKB"/>
</dbReference>
<dbReference type="GO" id="GO:0042803">
    <property type="term" value="F:protein homodimerization activity"/>
    <property type="evidence" value="ECO:0000314"/>
    <property type="project" value="UniProtKB"/>
</dbReference>
<dbReference type="GO" id="GO:0102765">
    <property type="term" value="F:UDP-D-apiose synthase activity"/>
    <property type="evidence" value="ECO:0000316"/>
    <property type="project" value="UniProtKB"/>
</dbReference>
<dbReference type="GO" id="GO:0071555">
    <property type="term" value="P:cell wall organization"/>
    <property type="evidence" value="ECO:0007669"/>
    <property type="project" value="UniProtKB-KW"/>
</dbReference>
<dbReference type="GO" id="GO:0010396">
    <property type="term" value="P:rhamnogalacturonan II metabolic process"/>
    <property type="evidence" value="ECO:0000316"/>
    <property type="project" value="UniProtKB"/>
</dbReference>
<dbReference type="GO" id="GO:0033352">
    <property type="term" value="P:UDP-D-apiose biosynthetic process"/>
    <property type="evidence" value="ECO:0000316"/>
    <property type="project" value="UniProtKB"/>
</dbReference>
<dbReference type="CDD" id="cd05257">
    <property type="entry name" value="Arna_like_SDR_e"/>
    <property type="match status" value="1"/>
</dbReference>
<dbReference type="FunFam" id="3.40.50.720:FF:000201">
    <property type="entry name" value="UDP-D-apiose/UDP-D-xylose synthase 2"/>
    <property type="match status" value="1"/>
</dbReference>
<dbReference type="Gene3D" id="3.40.50.720">
    <property type="entry name" value="NAD(P)-binding Rossmann-like Domain"/>
    <property type="match status" value="1"/>
</dbReference>
<dbReference type="InterPro" id="IPR045869">
    <property type="entry name" value="Arna-like_SDR_e"/>
</dbReference>
<dbReference type="InterPro" id="IPR001509">
    <property type="entry name" value="Epimerase_deHydtase"/>
</dbReference>
<dbReference type="InterPro" id="IPR050177">
    <property type="entry name" value="Lipid_A_modif_metabolic_enz"/>
</dbReference>
<dbReference type="InterPro" id="IPR036291">
    <property type="entry name" value="NAD(P)-bd_dom_sf"/>
</dbReference>
<dbReference type="PANTHER" id="PTHR43245">
    <property type="entry name" value="BIFUNCTIONAL POLYMYXIN RESISTANCE PROTEIN ARNA"/>
    <property type="match status" value="1"/>
</dbReference>
<dbReference type="PANTHER" id="PTHR43245:SF13">
    <property type="entry name" value="UDP-D-APIOSE_UDP-D-XYLOSE SYNTHASE 2"/>
    <property type="match status" value="1"/>
</dbReference>
<dbReference type="Pfam" id="PF01370">
    <property type="entry name" value="Epimerase"/>
    <property type="match status" value="1"/>
</dbReference>
<dbReference type="SUPFAM" id="SSF51735">
    <property type="entry name" value="NAD(P)-binding Rossmann-fold domains"/>
    <property type="match status" value="1"/>
</dbReference>
<reference key="1">
    <citation type="journal article" date="2000" name="Nature">
        <title>Sequence and analysis of chromosome 1 of the plant Arabidopsis thaliana.</title>
        <authorList>
            <person name="Theologis A."/>
            <person name="Ecker J.R."/>
            <person name="Palm C.J."/>
            <person name="Federspiel N.A."/>
            <person name="Kaul S."/>
            <person name="White O."/>
            <person name="Alonso J."/>
            <person name="Altafi H."/>
            <person name="Araujo R."/>
            <person name="Bowman C.L."/>
            <person name="Brooks S.Y."/>
            <person name="Buehler E."/>
            <person name="Chan A."/>
            <person name="Chao Q."/>
            <person name="Chen H."/>
            <person name="Cheuk R.F."/>
            <person name="Chin C.W."/>
            <person name="Chung M.K."/>
            <person name="Conn L."/>
            <person name="Conway A.B."/>
            <person name="Conway A.R."/>
            <person name="Creasy T.H."/>
            <person name="Dewar K."/>
            <person name="Dunn P."/>
            <person name="Etgu P."/>
            <person name="Feldblyum T.V."/>
            <person name="Feng J.-D."/>
            <person name="Fong B."/>
            <person name="Fujii C.Y."/>
            <person name="Gill J.E."/>
            <person name="Goldsmith A.D."/>
            <person name="Haas B."/>
            <person name="Hansen N.F."/>
            <person name="Hughes B."/>
            <person name="Huizar L."/>
            <person name="Hunter J.L."/>
            <person name="Jenkins J."/>
            <person name="Johnson-Hopson C."/>
            <person name="Khan S."/>
            <person name="Khaykin E."/>
            <person name="Kim C.J."/>
            <person name="Koo H.L."/>
            <person name="Kremenetskaia I."/>
            <person name="Kurtz D.B."/>
            <person name="Kwan A."/>
            <person name="Lam B."/>
            <person name="Langin-Hooper S."/>
            <person name="Lee A."/>
            <person name="Lee J.M."/>
            <person name="Lenz C.A."/>
            <person name="Li J.H."/>
            <person name="Li Y.-P."/>
            <person name="Lin X."/>
            <person name="Liu S.X."/>
            <person name="Liu Z.A."/>
            <person name="Luros J.S."/>
            <person name="Maiti R."/>
            <person name="Marziali A."/>
            <person name="Militscher J."/>
            <person name="Miranda M."/>
            <person name="Nguyen M."/>
            <person name="Nierman W.C."/>
            <person name="Osborne B.I."/>
            <person name="Pai G."/>
            <person name="Peterson J."/>
            <person name="Pham P.K."/>
            <person name="Rizzo M."/>
            <person name="Rooney T."/>
            <person name="Rowley D."/>
            <person name="Sakano H."/>
            <person name="Salzberg S.L."/>
            <person name="Schwartz J.R."/>
            <person name="Shinn P."/>
            <person name="Southwick A.M."/>
            <person name="Sun H."/>
            <person name="Tallon L.J."/>
            <person name="Tambunga G."/>
            <person name="Toriumi M.J."/>
            <person name="Town C.D."/>
            <person name="Utterback T."/>
            <person name="Van Aken S."/>
            <person name="Vaysberg M."/>
            <person name="Vysotskaia V.S."/>
            <person name="Walker M."/>
            <person name="Wu D."/>
            <person name="Yu G."/>
            <person name="Fraser C.M."/>
            <person name="Venter J.C."/>
            <person name="Davis R.W."/>
        </authorList>
    </citation>
    <scope>NUCLEOTIDE SEQUENCE [LARGE SCALE GENOMIC DNA]</scope>
    <source>
        <strain>cv. Columbia</strain>
    </source>
</reference>
<reference key="2">
    <citation type="journal article" date="2017" name="Plant J.">
        <title>Araport11: a complete reannotation of the Arabidopsis thaliana reference genome.</title>
        <authorList>
            <person name="Cheng C.Y."/>
            <person name="Krishnakumar V."/>
            <person name="Chan A.P."/>
            <person name="Thibaud-Nissen F."/>
            <person name="Schobel S."/>
            <person name="Town C.D."/>
        </authorList>
    </citation>
    <scope>GENOME REANNOTATION</scope>
    <source>
        <strain>cv. Columbia</strain>
    </source>
</reference>
<reference key="3">
    <citation type="journal article" date="2003" name="Science">
        <title>Empirical analysis of transcriptional activity in the Arabidopsis genome.</title>
        <authorList>
            <person name="Yamada K."/>
            <person name="Lim J."/>
            <person name="Dale J.M."/>
            <person name="Chen H."/>
            <person name="Shinn P."/>
            <person name="Palm C.J."/>
            <person name="Southwick A.M."/>
            <person name="Wu H.C."/>
            <person name="Kim C.J."/>
            <person name="Nguyen M."/>
            <person name="Pham P.K."/>
            <person name="Cheuk R.F."/>
            <person name="Karlin-Newmann G."/>
            <person name="Liu S.X."/>
            <person name="Lam B."/>
            <person name="Sakano H."/>
            <person name="Wu T."/>
            <person name="Yu G."/>
            <person name="Miranda M."/>
            <person name="Quach H.L."/>
            <person name="Tripp M."/>
            <person name="Chang C.H."/>
            <person name="Lee J.M."/>
            <person name="Toriumi M.J."/>
            <person name="Chan M.M."/>
            <person name="Tang C.C."/>
            <person name="Onodera C.S."/>
            <person name="Deng J.M."/>
            <person name="Akiyama K."/>
            <person name="Ansari Y."/>
            <person name="Arakawa T."/>
            <person name="Banh J."/>
            <person name="Banno F."/>
            <person name="Bowser L."/>
            <person name="Brooks S.Y."/>
            <person name="Carninci P."/>
            <person name="Chao Q."/>
            <person name="Choy N."/>
            <person name="Enju A."/>
            <person name="Goldsmith A.D."/>
            <person name="Gurjal M."/>
            <person name="Hansen N.F."/>
            <person name="Hayashizaki Y."/>
            <person name="Johnson-Hopson C."/>
            <person name="Hsuan V.W."/>
            <person name="Iida K."/>
            <person name="Karnes M."/>
            <person name="Khan S."/>
            <person name="Koesema E."/>
            <person name="Ishida J."/>
            <person name="Jiang P.X."/>
            <person name="Jones T."/>
            <person name="Kawai J."/>
            <person name="Kamiya A."/>
            <person name="Meyers C."/>
            <person name="Nakajima M."/>
            <person name="Narusaka M."/>
            <person name="Seki M."/>
            <person name="Sakurai T."/>
            <person name="Satou M."/>
            <person name="Tamse R."/>
            <person name="Vaysberg M."/>
            <person name="Wallender E.K."/>
            <person name="Wong C."/>
            <person name="Yamamura Y."/>
            <person name="Yuan S."/>
            <person name="Shinozaki K."/>
            <person name="Davis R.W."/>
            <person name="Theologis A."/>
            <person name="Ecker J.R."/>
        </authorList>
    </citation>
    <scope>NUCLEOTIDE SEQUENCE [LARGE SCALE MRNA]</scope>
    <source>
        <strain>cv. Columbia</strain>
    </source>
</reference>
<reference key="4">
    <citation type="submission" date="2002-03" db="EMBL/GenBank/DDBJ databases">
        <title>Full-length cDNA from Arabidopsis thaliana.</title>
        <authorList>
            <person name="Brover V.V."/>
            <person name="Troukhan M.E."/>
            <person name="Alexandrov N.A."/>
            <person name="Lu Y.-P."/>
            <person name="Flavell R.B."/>
            <person name="Feldmann K.A."/>
        </authorList>
    </citation>
    <scope>NUCLEOTIDE SEQUENCE [LARGE SCALE MRNA]</scope>
</reference>
<reference key="5">
    <citation type="journal article" date="2020" name="Plant J.">
        <title>UDP-Api/UDP-Xyl synthases affect plant development by controlling the content of UDP-Api to regulate the RG-II-borate complex.</title>
        <authorList>
            <person name="Zhao X."/>
            <person name="Ebert B."/>
            <person name="Zhang B."/>
            <person name="Liu H."/>
            <person name="Zhang Y."/>
            <person name="Zeng W."/>
            <person name="Rautengarten C."/>
            <person name="Li H."/>
            <person name="Chen X."/>
            <person name="Bacic A."/>
            <person name="Wang G."/>
            <person name="Men S."/>
            <person name="Zhou Y."/>
            <person name="Heazlewood J.L."/>
            <person name="Wu A.M."/>
        </authorList>
    </citation>
    <scope>FUNCTION</scope>
    <scope>DISRUPTION PHENOTYPE</scope>
    <scope>TISSUE SPECIFICITY</scope>
    <scope>SUBCELLULAR LOCATION</scope>
    <scope>SUBUNIT</scope>
    <scope>INTERACTION WITH AXS1</scope>
    <source>
        <strain>cv. Columbia</strain>
    </source>
</reference>
<gene>
    <name evidence="3" type="primary">AXS2</name>
    <name evidence="5" type="ordered locus">At1g08200</name>
    <name evidence="6" type="ORF">T23G18.6</name>
</gene>
<accession>Q9SGE0</accession>
<accession>Q8L9F5</accession>
<accession>Q94B32</accession>
<keyword id="KW-0961">Cell wall biogenesis/degradation</keyword>
<keyword id="KW-0963">Cytoplasm</keyword>
<keyword id="KW-0456">Lyase</keyword>
<keyword id="KW-0520">NAD</keyword>
<keyword id="KW-1185">Reference proteome</keyword>
<proteinExistence type="evidence at protein level"/>
<organism>
    <name type="scientific">Arabidopsis thaliana</name>
    <name type="common">Mouse-ear cress</name>
    <dbReference type="NCBI Taxonomy" id="3702"/>
    <lineage>
        <taxon>Eukaryota</taxon>
        <taxon>Viridiplantae</taxon>
        <taxon>Streptophyta</taxon>
        <taxon>Embryophyta</taxon>
        <taxon>Tracheophyta</taxon>
        <taxon>Spermatophyta</taxon>
        <taxon>Magnoliopsida</taxon>
        <taxon>eudicotyledons</taxon>
        <taxon>Gunneridae</taxon>
        <taxon>Pentapetalae</taxon>
        <taxon>rosids</taxon>
        <taxon>malvids</taxon>
        <taxon>Brassicales</taxon>
        <taxon>Brassicaceae</taxon>
        <taxon>Camelineae</taxon>
        <taxon>Arabidopsis</taxon>
    </lineage>
</organism>
<sequence>MANGADRLDLDGKPIKPMTICMIGAGGFIGSHLCEKLMTETPHKVLALDVYNDKIKHLLEPDTVQWAGRIQFHRINIKHDSRLEGLIKMADLTINLAAICTPADYNTRPLDTIYSNFIDALPVVKYCSENNKRLIHFSTCEVYGKTIGSFLPKDHPLRQDPEFYVLKEDISPCIFGSIEKQRWSYACAKQLIERLVYAEGAENGLEFTIVRPFNWIGPRMDFIPGIDGPSEGVPRVLACFSNNLLRREPLKLVDGGESQRTFIYIKDAIEAVLLMIENPERANGHIFNVGNPNNEVTVRQLAEMMTEVYAKVSGETAIESPTIDVSSKEFYGEGYDDSDKRIPDMTIINRQLGWNPKTSLWDLLESTLTYQHTTYAEAIKKATSKPVAS</sequence>